<organism>
    <name type="scientific">Homo sapiens</name>
    <name type="common">Human</name>
    <dbReference type="NCBI Taxonomy" id="9606"/>
    <lineage>
        <taxon>Eukaryota</taxon>
        <taxon>Metazoa</taxon>
        <taxon>Chordata</taxon>
        <taxon>Craniata</taxon>
        <taxon>Vertebrata</taxon>
        <taxon>Euteleostomi</taxon>
        <taxon>Mammalia</taxon>
        <taxon>Eutheria</taxon>
        <taxon>Euarchontoglires</taxon>
        <taxon>Primates</taxon>
        <taxon>Haplorrhini</taxon>
        <taxon>Catarrhini</taxon>
        <taxon>Hominidae</taxon>
        <taxon>Homo</taxon>
    </lineage>
</organism>
<comment type="function">
    <text evidence="1">Essential for male fertility. Required for sperm development.</text>
</comment>
<comment type="subunit">
    <text evidence="1">Interacts with ODF1 and ODF2. Interacts with CCDC38. Interacts with CCDC146. Interacts with CFAP53.</text>
</comment>
<comment type="interaction">
    <interactant intactId="EBI-747041">
        <id>Q96M95</id>
    </interactant>
    <interactant intactId="EBI-10172526">
        <id>Q9UJV3-2</id>
        <label>MID2</label>
    </interactant>
    <organismsDiffer>false</organismsDiffer>
    <experiments>3</experiments>
</comment>
<comment type="interaction">
    <interactant intactId="EBI-747041">
        <id>Q96M95</id>
    </interactant>
    <interactant intactId="EBI-1105213">
        <id>Q9UBB9</id>
        <label>TFIP11</label>
    </interactant>
    <organismsDiffer>false</organismsDiffer>
    <experiments>5</experiments>
</comment>
<comment type="interaction">
    <interactant intactId="EBI-11750401">
        <id>Q96M95-2</id>
    </interactant>
    <interactant intactId="EBI-10172526">
        <id>Q9UJV3-2</id>
        <label>MID2</label>
    </interactant>
    <organismsDiffer>false</organismsDiffer>
    <experiments>3</experiments>
</comment>
<comment type="interaction">
    <interactant intactId="EBI-11750401">
        <id>Q96M95-2</id>
    </interactant>
    <interactant intactId="EBI-739895">
        <id>Q8N6Y0</id>
        <label>USHBP1</label>
    </interactant>
    <organismsDiffer>false</organismsDiffer>
    <experiments>3</experiments>
</comment>
<comment type="subcellular location">
    <subcellularLocation>
        <location evidence="1">Cytoplasm</location>
        <location evidence="1">Perinuclear region</location>
    </subcellularLocation>
    <subcellularLocation>
        <location evidence="1">Cytoplasm</location>
        <location evidence="1">Cytoskeleton</location>
    </subcellularLocation>
    <subcellularLocation>
        <location evidence="1">Cell projection</location>
        <location evidence="1">Cilium</location>
        <location evidence="1">Flagellum</location>
    </subcellularLocation>
    <subcellularLocation>
        <location evidence="1">Cytoplasm</location>
        <location evidence="1">Cytoskeleton</location>
        <location evidence="1">Microtubule organizing center</location>
        <location evidence="1">Centrosome</location>
    </subcellularLocation>
    <text evidence="1">Weakly expressed in the cytoplasm of round spermatids. In elongating spermatids, localizes to the manchette microtubules and the perinuclear ring. In the sperm flagellum, strongly expressed in the principle piece and also located to the connecting piece and weakly to the midpiece. Localizes to the centrosome in somatic cells.</text>
</comment>
<comment type="alternative products">
    <event type="alternative splicing"/>
    <isoform>
        <id>Q96M95-1</id>
        <name>1</name>
        <sequence type="displayed"/>
    </isoform>
    <isoform>
        <id>Q96M95-2</id>
        <name>2</name>
        <sequence type="described" ref="VSP_055651"/>
    </isoform>
</comment>
<comment type="similarity">
    <text evidence="4">Belongs to the CFAP73 family.</text>
</comment>
<reference key="1">
    <citation type="journal article" date="2004" name="Nat. Genet.">
        <title>Complete sequencing and characterization of 21,243 full-length human cDNAs.</title>
        <authorList>
            <person name="Ota T."/>
            <person name="Suzuki Y."/>
            <person name="Nishikawa T."/>
            <person name="Otsuki T."/>
            <person name="Sugiyama T."/>
            <person name="Irie R."/>
            <person name="Wakamatsu A."/>
            <person name="Hayashi K."/>
            <person name="Sato H."/>
            <person name="Nagai K."/>
            <person name="Kimura K."/>
            <person name="Makita H."/>
            <person name="Sekine M."/>
            <person name="Obayashi M."/>
            <person name="Nishi T."/>
            <person name="Shibahara T."/>
            <person name="Tanaka T."/>
            <person name="Ishii S."/>
            <person name="Yamamoto J."/>
            <person name="Saito K."/>
            <person name="Kawai Y."/>
            <person name="Isono Y."/>
            <person name="Nakamura Y."/>
            <person name="Nagahari K."/>
            <person name="Murakami K."/>
            <person name="Yasuda T."/>
            <person name="Iwayanagi T."/>
            <person name="Wagatsuma M."/>
            <person name="Shiratori A."/>
            <person name="Sudo H."/>
            <person name="Hosoiri T."/>
            <person name="Kaku Y."/>
            <person name="Kodaira H."/>
            <person name="Kondo H."/>
            <person name="Sugawara M."/>
            <person name="Takahashi M."/>
            <person name="Kanda K."/>
            <person name="Yokoi T."/>
            <person name="Furuya T."/>
            <person name="Kikkawa E."/>
            <person name="Omura Y."/>
            <person name="Abe K."/>
            <person name="Kamihara K."/>
            <person name="Katsuta N."/>
            <person name="Sato K."/>
            <person name="Tanikawa M."/>
            <person name="Yamazaki M."/>
            <person name="Ninomiya K."/>
            <person name="Ishibashi T."/>
            <person name="Yamashita H."/>
            <person name="Murakawa K."/>
            <person name="Fujimori K."/>
            <person name="Tanai H."/>
            <person name="Kimata M."/>
            <person name="Watanabe M."/>
            <person name="Hiraoka S."/>
            <person name="Chiba Y."/>
            <person name="Ishida S."/>
            <person name="Ono Y."/>
            <person name="Takiguchi S."/>
            <person name="Watanabe S."/>
            <person name="Yosida M."/>
            <person name="Hotuta T."/>
            <person name="Kusano J."/>
            <person name="Kanehori K."/>
            <person name="Takahashi-Fujii A."/>
            <person name="Hara H."/>
            <person name="Tanase T.-O."/>
            <person name="Nomura Y."/>
            <person name="Togiya S."/>
            <person name="Komai F."/>
            <person name="Hara R."/>
            <person name="Takeuchi K."/>
            <person name="Arita M."/>
            <person name="Imose N."/>
            <person name="Musashino K."/>
            <person name="Yuuki H."/>
            <person name="Oshima A."/>
            <person name="Sasaki N."/>
            <person name="Aotsuka S."/>
            <person name="Yoshikawa Y."/>
            <person name="Matsunawa H."/>
            <person name="Ichihara T."/>
            <person name="Shiohata N."/>
            <person name="Sano S."/>
            <person name="Moriya S."/>
            <person name="Momiyama H."/>
            <person name="Satoh N."/>
            <person name="Takami S."/>
            <person name="Terashima Y."/>
            <person name="Suzuki O."/>
            <person name="Nakagawa S."/>
            <person name="Senoh A."/>
            <person name="Mizoguchi H."/>
            <person name="Goto Y."/>
            <person name="Shimizu F."/>
            <person name="Wakebe H."/>
            <person name="Hishigaki H."/>
            <person name="Watanabe T."/>
            <person name="Sugiyama A."/>
            <person name="Takemoto M."/>
            <person name="Kawakami B."/>
            <person name="Yamazaki M."/>
            <person name="Watanabe K."/>
            <person name="Kumagai A."/>
            <person name="Itakura S."/>
            <person name="Fukuzumi Y."/>
            <person name="Fujimori Y."/>
            <person name="Komiyama M."/>
            <person name="Tashiro H."/>
            <person name="Tanigami A."/>
            <person name="Fujiwara T."/>
            <person name="Ono T."/>
            <person name="Yamada K."/>
            <person name="Fujii Y."/>
            <person name="Ozaki K."/>
            <person name="Hirao M."/>
            <person name="Ohmori Y."/>
            <person name="Kawabata A."/>
            <person name="Hikiji T."/>
            <person name="Kobatake N."/>
            <person name="Inagaki H."/>
            <person name="Ikema Y."/>
            <person name="Okamoto S."/>
            <person name="Okitani R."/>
            <person name="Kawakami T."/>
            <person name="Noguchi S."/>
            <person name="Itoh T."/>
            <person name="Shigeta K."/>
            <person name="Senba T."/>
            <person name="Matsumura K."/>
            <person name="Nakajima Y."/>
            <person name="Mizuno T."/>
            <person name="Morinaga M."/>
            <person name="Sasaki M."/>
            <person name="Togashi T."/>
            <person name="Oyama M."/>
            <person name="Hata H."/>
            <person name="Watanabe M."/>
            <person name="Komatsu T."/>
            <person name="Mizushima-Sugano J."/>
            <person name="Satoh T."/>
            <person name="Shirai Y."/>
            <person name="Takahashi Y."/>
            <person name="Nakagawa K."/>
            <person name="Okumura K."/>
            <person name="Nagase T."/>
            <person name="Nomura N."/>
            <person name="Kikuchi H."/>
            <person name="Masuho Y."/>
            <person name="Yamashita R."/>
            <person name="Nakai K."/>
            <person name="Yada T."/>
            <person name="Nakamura Y."/>
            <person name="Ohara O."/>
            <person name="Isogai T."/>
            <person name="Sugano S."/>
        </authorList>
    </citation>
    <scope>NUCLEOTIDE SEQUENCE [LARGE SCALE MRNA] (ISOFORM 1)</scope>
    <source>
        <tissue>Testis</tissue>
    </source>
</reference>
<reference key="2">
    <citation type="journal article" date="2004" name="Genome Res.">
        <title>The status, quality, and expansion of the NIH full-length cDNA project: the Mammalian Gene Collection (MGC).</title>
        <authorList>
            <consortium name="The MGC Project Team"/>
        </authorList>
    </citation>
    <scope>NUCLEOTIDE SEQUENCE [LARGE SCALE MRNA] (ISOFORM 2)</scope>
    <source>
        <tissue>Brain</tissue>
    </source>
</reference>
<evidence type="ECO:0000250" key="1">
    <source>
        <dbReference type="UniProtKB" id="Q5SV66"/>
    </source>
</evidence>
<evidence type="ECO:0000255" key="2"/>
<evidence type="ECO:0000303" key="3">
    <source>
    </source>
</evidence>
<evidence type="ECO:0000305" key="4"/>
<evidence type="ECO:0000312" key="5">
    <source>
        <dbReference type="HGNC" id="HGNC:26528"/>
    </source>
</evidence>
<gene>
    <name evidence="5" type="primary">CCDC42</name>
    <name evidence="5" type="synonym">CCDC42A</name>
</gene>
<dbReference type="EMBL" id="AK057296">
    <property type="protein sequence ID" value="BAB71414.1"/>
    <property type="molecule type" value="mRNA"/>
</dbReference>
<dbReference type="EMBL" id="BC029224">
    <property type="protein sequence ID" value="AAH29224.1"/>
    <property type="molecule type" value="mRNA"/>
</dbReference>
<dbReference type="CCDS" id="CCDS11145.1">
    <molecule id="Q96M95-1"/>
</dbReference>
<dbReference type="CCDS" id="CCDS54088.1">
    <molecule id="Q96M95-2"/>
</dbReference>
<dbReference type="RefSeq" id="NP_001151733.1">
    <molecule id="Q96M95-2"/>
    <property type="nucleotide sequence ID" value="NM_001158261.2"/>
</dbReference>
<dbReference type="RefSeq" id="NP_653282.2">
    <molecule id="Q96M95-1"/>
    <property type="nucleotide sequence ID" value="NM_144681.3"/>
</dbReference>
<dbReference type="SMR" id="Q96M95"/>
<dbReference type="BioGRID" id="127015">
    <property type="interactions" value="10"/>
</dbReference>
<dbReference type="FunCoup" id="Q96M95">
    <property type="interactions" value="4"/>
</dbReference>
<dbReference type="IntAct" id="Q96M95">
    <property type="interactions" value="7"/>
</dbReference>
<dbReference type="STRING" id="9606.ENSP00000293845"/>
<dbReference type="iPTMnet" id="Q96M95"/>
<dbReference type="PhosphoSitePlus" id="Q96M95"/>
<dbReference type="BioMuta" id="CCDC42"/>
<dbReference type="DMDM" id="97045403"/>
<dbReference type="MassIVE" id="Q96M95"/>
<dbReference type="PaxDb" id="9606-ENSP00000293845"/>
<dbReference type="PeptideAtlas" id="Q96M95"/>
<dbReference type="ProteomicsDB" id="77319">
    <molecule id="Q96M95-1"/>
</dbReference>
<dbReference type="Antibodypedia" id="12628">
    <property type="antibodies" value="130 antibodies from 17 providers"/>
</dbReference>
<dbReference type="DNASU" id="146849"/>
<dbReference type="Ensembl" id="ENST00000293845.8">
    <molecule id="Q96M95-1"/>
    <property type="protein sequence ID" value="ENSP00000293845.3"/>
    <property type="gene ID" value="ENSG00000161973.11"/>
</dbReference>
<dbReference type="Ensembl" id="ENST00000539522.2">
    <molecule id="Q96M95-2"/>
    <property type="protein sequence ID" value="ENSP00000444359.2"/>
    <property type="gene ID" value="ENSG00000161973.11"/>
</dbReference>
<dbReference type="GeneID" id="146849"/>
<dbReference type="KEGG" id="hsa:146849"/>
<dbReference type="MANE-Select" id="ENST00000293845.8">
    <property type="protein sequence ID" value="ENSP00000293845.3"/>
    <property type="RefSeq nucleotide sequence ID" value="NM_144681.3"/>
    <property type="RefSeq protein sequence ID" value="NP_653282.2"/>
</dbReference>
<dbReference type="UCSC" id="uc002gln.4">
    <molecule id="Q96M95-1"/>
    <property type="organism name" value="human"/>
</dbReference>
<dbReference type="AGR" id="HGNC:26528"/>
<dbReference type="CTD" id="146849"/>
<dbReference type="DisGeNET" id="146849"/>
<dbReference type="GeneCards" id="CCDC42"/>
<dbReference type="HGNC" id="HGNC:26528">
    <property type="gene designation" value="CCDC42"/>
</dbReference>
<dbReference type="HPA" id="ENSG00000161973">
    <property type="expression patterns" value="Tissue enriched (testis)"/>
</dbReference>
<dbReference type="neXtProt" id="NX_Q96M95"/>
<dbReference type="OpenTargets" id="ENSG00000161973"/>
<dbReference type="PharmGKB" id="PA142672159"/>
<dbReference type="VEuPathDB" id="HostDB:ENSG00000161973"/>
<dbReference type="eggNOG" id="ENOG502QRZS">
    <property type="taxonomic scope" value="Eukaryota"/>
</dbReference>
<dbReference type="GeneTree" id="ENSGT00940000153110"/>
<dbReference type="HOGENOM" id="CLU_061472_1_0_1"/>
<dbReference type="InParanoid" id="Q96M95"/>
<dbReference type="OMA" id="CADKKRV"/>
<dbReference type="OrthoDB" id="2134857at2759"/>
<dbReference type="PAN-GO" id="Q96M95">
    <property type="GO annotations" value="1 GO annotation based on evolutionary models"/>
</dbReference>
<dbReference type="PhylomeDB" id="Q96M95"/>
<dbReference type="TreeFam" id="TF327270"/>
<dbReference type="PathwayCommons" id="Q96M95"/>
<dbReference type="SignaLink" id="Q96M95"/>
<dbReference type="BioGRID-ORCS" id="146849">
    <property type="hits" value="7 hits in 1145 CRISPR screens"/>
</dbReference>
<dbReference type="ChiTaRS" id="CCDC42">
    <property type="organism name" value="human"/>
</dbReference>
<dbReference type="GenomeRNAi" id="146849"/>
<dbReference type="Pharos" id="Q96M95">
    <property type="development level" value="Tdark"/>
</dbReference>
<dbReference type="PRO" id="PR:Q96M95"/>
<dbReference type="Proteomes" id="UP000005640">
    <property type="component" value="Chromosome 17"/>
</dbReference>
<dbReference type="RNAct" id="Q96M95">
    <property type="molecule type" value="protein"/>
</dbReference>
<dbReference type="Bgee" id="ENSG00000161973">
    <property type="expression patterns" value="Expressed in left testis and 62 other cell types or tissues"/>
</dbReference>
<dbReference type="ExpressionAtlas" id="Q96M95">
    <property type="expression patterns" value="baseline and differential"/>
</dbReference>
<dbReference type="GO" id="GO:0005813">
    <property type="term" value="C:centrosome"/>
    <property type="evidence" value="ECO:0000250"/>
    <property type="project" value="UniProtKB"/>
</dbReference>
<dbReference type="GO" id="GO:0002177">
    <property type="term" value="C:manchette"/>
    <property type="evidence" value="ECO:0000250"/>
    <property type="project" value="UniProtKB"/>
</dbReference>
<dbReference type="GO" id="GO:0048471">
    <property type="term" value="C:perinuclear region of cytoplasm"/>
    <property type="evidence" value="ECO:0000250"/>
    <property type="project" value="UniProtKB"/>
</dbReference>
<dbReference type="GO" id="GO:0120212">
    <property type="term" value="C:sperm head-tail coupling apparatus"/>
    <property type="evidence" value="ECO:0000250"/>
    <property type="project" value="UniProtKB"/>
</dbReference>
<dbReference type="GO" id="GO:0097228">
    <property type="term" value="C:sperm principal piece"/>
    <property type="evidence" value="ECO:0000250"/>
    <property type="project" value="UniProtKB"/>
</dbReference>
<dbReference type="GO" id="GO:0001675">
    <property type="term" value="P:acrosome assembly"/>
    <property type="evidence" value="ECO:0007669"/>
    <property type="project" value="Ensembl"/>
</dbReference>
<dbReference type="GO" id="GO:0007098">
    <property type="term" value="P:centrosome cycle"/>
    <property type="evidence" value="ECO:0007669"/>
    <property type="project" value="Ensembl"/>
</dbReference>
<dbReference type="GO" id="GO:0060271">
    <property type="term" value="P:cilium assembly"/>
    <property type="evidence" value="ECO:0007669"/>
    <property type="project" value="Ensembl"/>
</dbReference>
<dbReference type="GO" id="GO:0007286">
    <property type="term" value="P:spermatid development"/>
    <property type="evidence" value="ECO:0000250"/>
    <property type="project" value="UniProtKB"/>
</dbReference>
<dbReference type="InterPro" id="IPR051147">
    <property type="entry name" value="CFAP_domain-containing"/>
</dbReference>
<dbReference type="InterPro" id="IPR025252">
    <property type="entry name" value="DUF4200"/>
</dbReference>
<dbReference type="PANTHER" id="PTHR21683:SF8">
    <property type="entry name" value="COILED-COIL DOMAIN-CONTAINING PROTEIN 42"/>
    <property type="match status" value="1"/>
</dbReference>
<dbReference type="PANTHER" id="PTHR21683">
    <property type="entry name" value="COILED-COIL DOMAIN-CONTAINING PROTEIN 42 LIKE-2-LIKE-RELATED"/>
    <property type="match status" value="1"/>
</dbReference>
<dbReference type="Pfam" id="PF13863">
    <property type="entry name" value="DUF4200"/>
    <property type="match status" value="1"/>
</dbReference>
<feature type="chain" id="PRO_0000234498" description="Coiled-coil domain-containing protein 42">
    <location>
        <begin position="1"/>
        <end position="316"/>
    </location>
</feature>
<feature type="coiled-coil region" evidence="2">
    <location>
        <begin position="39"/>
        <end position="146"/>
    </location>
</feature>
<feature type="coiled-coil region" evidence="2">
    <location>
        <begin position="178"/>
        <end position="232"/>
    </location>
</feature>
<feature type="splice variant" id="VSP_055651" description="In isoform 2." evidence="3">
    <location>
        <begin position="165"/>
        <end position="238"/>
    </location>
</feature>
<feature type="sequence variant" id="VAR_057786" description="In dbSNP:rs12952995.">
    <original>T</original>
    <variation>P</variation>
    <location>
        <position position="51"/>
    </location>
</feature>
<feature type="sequence variant" id="VAR_057787" description="In dbSNP:rs9893451.">
    <original>R</original>
    <variation>C</variation>
    <location>
        <position position="75"/>
    </location>
</feature>
<feature type="sequence variant" id="VAR_026282" description="In dbSNP:rs2288156.">
    <original>A</original>
    <variation>T</variation>
    <location>
        <position position="144"/>
    </location>
</feature>
<feature type="sequence conflict" description="In Ref. 1; BAB71414." evidence="4" ref="1">
    <original>P</original>
    <variation>L</variation>
    <location>
        <position position="40"/>
    </location>
</feature>
<keyword id="KW-0025">Alternative splicing</keyword>
<keyword id="KW-0966">Cell projection</keyword>
<keyword id="KW-0969">Cilium</keyword>
<keyword id="KW-0175">Coiled coil</keyword>
<keyword id="KW-0963">Cytoplasm</keyword>
<keyword id="KW-0206">Cytoskeleton</keyword>
<keyword id="KW-0221">Differentiation</keyword>
<keyword id="KW-0282">Flagellum</keyword>
<keyword id="KW-1267">Proteomics identification</keyword>
<keyword id="KW-1185">Reference proteome</keyword>
<keyword id="KW-0744">Spermatogenesis</keyword>
<protein>
    <recommendedName>
        <fullName evidence="4">Coiled-coil domain-containing protein 42</fullName>
    </recommendedName>
</protein>
<proteinExistence type="evidence at protein level"/>
<sequence length="316" mass="38019">MSLGIMEEEDLAEYFRLQYGERLLQMLQKLPNVEGASESPSIWLLEKKKETEIMHQTMVQKKKMFQRRMETLNLRWEELGVKEAQLKAHIQKSEQFIQENDQKRIRAMKKANKERELKCQHMQELTKRKQEMVALRLEHQRLSAKLKDYYIFNKYLEKVVENSEFEEIHEVIARYKTLVSMRHDLMQSAQEGQEKIERAKARLARYMEEKDDEILQQNNELARLQMRFDRARSNVIFWESRWAHIQNTAAKKTLLLGTIKMATLNLFQIVSKHLKEVTEVALEDTHKQLDMIQQFIQDRSDIWAEVKKKEQQRVRI</sequence>
<accession>Q96M95</accession>
<accession>Q8N6Q0</accession>
<name>CCD42_HUMAN</name>